<evidence type="ECO:0000250" key="1"/>
<evidence type="ECO:0000255" key="2"/>
<evidence type="ECO:0000256" key="3">
    <source>
        <dbReference type="SAM" id="MobiDB-lite"/>
    </source>
</evidence>
<evidence type="ECO:0000269" key="4">
    <source>
    </source>
</evidence>
<evidence type="ECO:0000269" key="5">
    <source>
    </source>
</evidence>
<evidence type="ECO:0000305" key="6"/>
<evidence type="ECO:0007744" key="7">
    <source>
    </source>
</evidence>
<evidence type="ECO:0007744" key="8">
    <source>
    </source>
</evidence>
<evidence type="ECO:0007829" key="9">
    <source>
        <dbReference type="PDB" id="4RSI"/>
    </source>
</evidence>
<evidence type="ECO:0007829" key="10">
    <source>
        <dbReference type="PDB" id="7Q2X"/>
    </source>
</evidence>
<evidence type="ECO:0007829" key="11">
    <source>
        <dbReference type="PDB" id="7Q2Y"/>
    </source>
</evidence>
<accession>Q12267</accession>
<accession>D6VY86</accession>
<dbReference type="EMBL" id="Z73258">
    <property type="protein sequence ID" value="CAA97646.1"/>
    <property type="molecule type" value="Genomic_DNA"/>
</dbReference>
<dbReference type="EMBL" id="Z73259">
    <property type="protein sequence ID" value="CAA97648.1"/>
    <property type="molecule type" value="Genomic_DNA"/>
</dbReference>
<dbReference type="EMBL" id="U53880">
    <property type="protein sequence ID" value="AAB67590.1"/>
    <property type="molecule type" value="Genomic_DNA"/>
</dbReference>
<dbReference type="EMBL" id="BK006945">
    <property type="protein sequence ID" value="DAA09402.1"/>
    <property type="molecule type" value="Genomic_DNA"/>
</dbReference>
<dbReference type="PIR" id="S64918">
    <property type="entry name" value="S64918"/>
</dbReference>
<dbReference type="RefSeq" id="NP_013187.1">
    <property type="nucleotide sequence ID" value="NM_001181973.1"/>
</dbReference>
<dbReference type="PDB" id="4RSI">
    <property type="method" value="X-ray"/>
    <property type="resolution" value="2.90 A"/>
    <property type="chains" value="B=555-951"/>
</dbReference>
<dbReference type="PDB" id="6YVD">
    <property type="method" value="EM"/>
    <property type="resolution" value="7.60 A"/>
    <property type="chains" value="D=1-1418"/>
</dbReference>
<dbReference type="PDB" id="6YVU">
    <property type="method" value="EM"/>
    <property type="resolution" value="7.50 A"/>
    <property type="chains" value="B=1-1418"/>
</dbReference>
<dbReference type="PDB" id="6YVV">
    <property type="method" value="EM"/>
    <property type="resolution" value="7.50 A"/>
    <property type="chains" value="B=1-1418"/>
</dbReference>
<dbReference type="PDB" id="7Q2X">
    <property type="method" value="EM"/>
    <property type="resolution" value="3.00 A"/>
    <property type="chains" value="B=1-1418"/>
</dbReference>
<dbReference type="PDB" id="7Q2Y">
    <property type="method" value="EM"/>
    <property type="chains" value="B=1-1418"/>
</dbReference>
<dbReference type="PDB" id="7QEN">
    <property type="method" value="EM"/>
    <property type="resolution" value="3.46 A"/>
    <property type="chains" value="B=1-1418"/>
</dbReference>
<dbReference type="PDBsum" id="4RSI"/>
<dbReference type="PDBsum" id="6YVD"/>
<dbReference type="PDBsum" id="6YVU"/>
<dbReference type="PDBsum" id="6YVV"/>
<dbReference type="PDBsum" id="7Q2X"/>
<dbReference type="PDBsum" id="7Q2Y"/>
<dbReference type="PDBsum" id="7QEN"/>
<dbReference type="EMDB" id="EMD-10944"/>
<dbReference type="EMDB" id="EMD-10951"/>
<dbReference type="EMDB" id="EMD-10952"/>
<dbReference type="EMDB" id="EMD-13783"/>
<dbReference type="EMDB" id="EMD-13784"/>
<dbReference type="EMDB" id="EMD-13934"/>
<dbReference type="SMR" id="Q12267"/>
<dbReference type="BioGRID" id="31359">
    <property type="interactions" value="342"/>
</dbReference>
<dbReference type="ComplexPortal" id="CPX-1869">
    <property type="entry name" value="Nuclear condensin complex"/>
</dbReference>
<dbReference type="DIP" id="DIP-3007N"/>
<dbReference type="FunCoup" id="Q12267">
    <property type="interactions" value="1084"/>
</dbReference>
<dbReference type="IntAct" id="Q12267">
    <property type="interactions" value="16"/>
</dbReference>
<dbReference type="MINT" id="Q12267"/>
<dbReference type="STRING" id="4932.YLR086W"/>
<dbReference type="GlyGen" id="Q12267">
    <property type="glycosylation" value="2 sites, 1 O-linked glycan (2 sites)"/>
</dbReference>
<dbReference type="iPTMnet" id="Q12267"/>
<dbReference type="PaxDb" id="4932-YLR086W"/>
<dbReference type="PeptideAtlas" id="Q12267"/>
<dbReference type="EnsemblFungi" id="YLR086W_mRNA">
    <property type="protein sequence ID" value="YLR086W"/>
    <property type="gene ID" value="YLR086W"/>
</dbReference>
<dbReference type="GeneID" id="850775"/>
<dbReference type="KEGG" id="sce:YLR086W"/>
<dbReference type="AGR" id="SGD:S000004076"/>
<dbReference type="SGD" id="S000004076">
    <property type="gene designation" value="SMC4"/>
</dbReference>
<dbReference type="VEuPathDB" id="FungiDB:YLR086W"/>
<dbReference type="eggNOG" id="KOG0996">
    <property type="taxonomic scope" value="Eukaryota"/>
</dbReference>
<dbReference type="GeneTree" id="ENSGT00900000141094"/>
<dbReference type="HOGENOM" id="CLU_001042_4_1_1"/>
<dbReference type="InParanoid" id="Q12267"/>
<dbReference type="OMA" id="CPALDNM"/>
<dbReference type="OrthoDB" id="5575062at2759"/>
<dbReference type="BioCyc" id="YEAST:G3O-32237-MONOMER"/>
<dbReference type="BioGRID-ORCS" id="850775">
    <property type="hits" value="4 hits in 10 CRISPR screens"/>
</dbReference>
<dbReference type="EvolutionaryTrace" id="Q12267"/>
<dbReference type="PRO" id="PR:Q12267"/>
<dbReference type="Proteomes" id="UP000002311">
    <property type="component" value="Chromosome XII"/>
</dbReference>
<dbReference type="RNAct" id="Q12267">
    <property type="molecule type" value="protein"/>
</dbReference>
<dbReference type="GO" id="GO:0000796">
    <property type="term" value="C:condensin complex"/>
    <property type="evidence" value="ECO:0000314"/>
    <property type="project" value="SGD"/>
</dbReference>
<dbReference type="GO" id="GO:0005737">
    <property type="term" value="C:cytoplasm"/>
    <property type="evidence" value="ECO:0007669"/>
    <property type="project" value="UniProtKB-SubCell"/>
</dbReference>
<dbReference type="GO" id="GO:0005634">
    <property type="term" value="C:nucleus"/>
    <property type="evidence" value="ECO:0007005"/>
    <property type="project" value="SGD"/>
</dbReference>
<dbReference type="GO" id="GO:0005524">
    <property type="term" value="F:ATP binding"/>
    <property type="evidence" value="ECO:0007669"/>
    <property type="project" value="UniProtKB-KW"/>
</dbReference>
<dbReference type="GO" id="GO:0016887">
    <property type="term" value="F:ATP hydrolysis activity"/>
    <property type="evidence" value="ECO:0007669"/>
    <property type="project" value="InterPro"/>
</dbReference>
<dbReference type="GO" id="GO:0003682">
    <property type="term" value="F:chromatin binding"/>
    <property type="evidence" value="ECO:0000314"/>
    <property type="project" value="SGD"/>
</dbReference>
<dbReference type="GO" id="GO:0051301">
    <property type="term" value="P:cell division"/>
    <property type="evidence" value="ECO:0007669"/>
    <property type="project" value="UniProtKB-KW"/>
</dbReference>
<dbReference type="GO" id="GO:0030261">
    <property type="term" value="P:chromosome condensation"/>
    <property type="evidence" value="ECO:0000303"/>
    <property type="project" value="ComplexPortal"/>
</dbReference>
<dbReference type="GO" id="GO:0007076">
    <property type="term" value="P:mitotic chromosome condensation"/>
    <property type="evidence" value="ECO:0000315"/>
    <property type="project" value="SGD"/>
</dbReference>
<dbReference type="GO" id="GO:0000070">
    <property type="term" value="P:mitotic sister chromatid segregation"/>
    <property type="evidence" value="ECO:0000315"/>
    <property type="project" value="SGD"/>
</dbReference>
<dbReference type="GO" id="GO:0070550">
    <property type="term" value="P:rDNA chromatin condensation"/>
    <property type="evidence" value="ECO:0000315"/>
    <property type="project" value="SGD"/>
</dbReference>
<dbReference type="GO" id="GO:0070058">
    <property type="term" value="P:tRNA gene clustering"/>
    <property type="evidence" value="ECO:0000315"/>
    <property type="project" value="SGD"/>
</dbReference>
<dbReference type="FunFam" id="3.40.50.300:FF:000481">
    <property type="entry name" value="Structural maintenance of chromosomes 4"/>
    <property type="match status" value="1"/>
</dbReference>
<dbReference type="FunFam" id="3.40.50.300:FF:000585">
    <property type="entry name" value="Structural maintenance of chromosomes 4"/>
    <property type="match status" value="1"/>
</dbReference>
<dbReference type="FunFam" id="1.20.1060.20:FF:000012">
    <property type="entry name" value="Structural maintenance of chromosomes protein"/>
    <property type="match status" value="1"/>
</dbReference>
<dbReference type="Gene3D" id="1.20.1060.20">
    <property type="match status" value="1"/>
</dbReference>
<dbReference type="Gene3D" id="3.30.70.1620">
    <property type="match status" value="1"/>
</dbReference>
<dbReference type="Gene3D" id="3.40.50.300">
    <property type="entry name" value="P-loop containing nucleotide triphosphate hydrolases"/>
    <property type="match status" value="2"/>
</dbReference>
<dbReference type="InterPro" id="IPR027417">
    <property type="entry name" value="P-loop_NTPase"/>
</dbReference>
<dbReference type="InterPro" id="IPR003395">
    <property type="entry name" value="RecF/RecN/SMC_N"/>
</dbReference>
<dbReference type="InterPro" id="IPR024704">
    <property type="entry name" value="SMC"/>
</dbReference>
<dbReference type="InterPro" id="IPR010935">
    <property type="entry name" value="SMC_hinge"/>
</dbReference>
<dbReference type="InterPro" id="IPR036277">
    <property type="entry name" value="SMC_hinge_sf"/>
</dbReference>
<dbReference type="PANTHER" id="PTHR18937:SF172">
    <property type="entry name" value="STRUCTURAL MAINTENANCE OF CHROMOSOMES PROTEIN"/>
    <property type="match status" value="1"/>
</dbReference>
<dbReference type="PANTHER" id="PTHR18937">
    <property type="entry name" value="STRUCTURAL MAINTENANCE OF CHROMOSOMES SMC FAMILY MEMBER"/>
    <property type="match status" value="1"/>
</dbReference>
<dbReference type="Pfam" id="PF06470">
    <property type="entry name" value="SMC_hinge"/>
    <property type="match status" value="1"/>
</dbReference>
<dbReference type="Pfam" id="PF02463">
    <property type="entry name" value="SMC_N"/>
    <property type="match status" value="1"/>
</dbReference>
<dbReference type="PIRSF" id="PIRSF005719">
    <property type="entry name" value="SMC"/>
    <property type="match status" value="1"/>
</dbReference>
<dbReference type="SMART" id="SM00968">
    <property type="entry name" value="SMC_hinge"/>
    <property type="match status" value="1"/>
</dbReference>
<dbReference type="SUPFAM" id="SSF52540">
    <property type="entry name" value="P-loop containing nucleoside triphosphate hydrolases"/>
    <property type="match status" value="1"/>
</dbReference>
<dbReference type="SUPFAM" id="SSF75553">
    <property type="entry name" value="Smc hinge domain"/>
    <property type="match status" value="1"/>
</dbReference>
<sequence length="1418" mass="162189">MSDSPLSKRQKRKSAQEPELSLDQGDAEEDSQVENRVNLSENTPEPDLPALEASYSKSYTPRKLVLSSGENRYAFSQPTNSTTTSLHVPNLQPPKTSSRGRDHKSYSQSPPRSPGRSPTRRLELLQLSPVKNSRVELQKIYDRHQSSSKQQSRLFINELVLENFKSYAGKQVVGPFHTSFSAVVGPNGSGKSNVIDSMLFVFGFRANKMRQDRLSDLIHKSEAFPSLQSCSVAVHFQYVIDESSGTSRIDEEKPGLIITRKAFKNNSSKYYINEKESSYTEVTKLLKNEGIDLDHKRFLILQGEVENIAQMKPKAEKESDDGLLEYLEDIIGTANYKPLIEERMGQIENLNEVCLEKENRFEIVDREKNSLESGKETALEFLEKEKQLTLLRSKLFQFKLLQSNSKLASTLEKISSSNKDLEDEKMKFQESLKKVDEIKAQRKEIKDRISSCSSKEKTLVLERRELEGTRVSLEERTKNLVSKMEKAEKTLKSTKHSISEAENMLEELRGQQTEHETEIKDLTQLLEKERSILDDIKLSLKDKTKNISAEIIRHEKELEPWDLQLQEKESQIQLAESELSLLEETQAKLKKNVETLEEKILAKKTHKQELQDLILDLKKKLNSLKDERSQGEKNFTSAHLKLKEMQKVLNAHRQRAMEARSSLSKAQNKSKVLTALSRLQKSGRINGFHGRLGDLGVIDDSFDVAISTACPRLDDVVVDTVECAQHCIDYLRKNKLGYARFILLDRLRQFNLQPISTPENVPRLFDLVKPKNPKFSNAFYSVLRDTLVAQNLKQANNVAYGKKRFRVVTVDGKLIDISGTMSGGGNHVAKGLMKLGTNQSDKVDDYTPEEVDKIERELSERENNFRVASDTVHEMEEELKKLRDHEPDLESQISKAEMEADSLASELTLAEQQVKEAEMAYVKAVSDKAQLNVVMKNLERLRGEYNDLQSETKTKKEKIKGLQDEIMKIGGIKLQMQNSKVESVCQKLDILVAKLKKVKSASKKSGGDVVKFQKLLQNSERDVELSSDELKVIEEQLKHTKLALAENDTNMNETLNLKVELKEQSEQLKEQMEDMEESINEFKSIEIEMKNKLEKLNSLLTYIKSEITQQEKGLNELSIRDVTHTLGMLDDNKMDSVKEDVKNNQELDQEYRSCETQDESEIKDAETSCDNYHPMNIDETSDEVSRGIPRLSEDELRELDVELIESKINELSYYVEETNVDIGVLEEYARRLAEFKRRKLDLNNAVQKRDEVKEQLGILKKKRFDEFMAGFNIISMTLKEMYQMITMGGNAELELVDSLDPFSEGVTFSVMPPKKSWRNITNLSGGEKTLSSLALVFALHKYKPTPLYVMDEIDAALDFRNVSIVANYIKERTKNAQFIVISLRNNMFELAQQLVGVYKRDNRTKSTTIKNIDILNRT</sequence>
<comment type="function">
    <text>Central component of the condensin complex, a complex required for conversion of interphase chromatin into mitotic-like condense chromosomes. The condensin complex probably introduces positive supercoils into relaxed DNA in the presence of type I topoisomerases and converts nicked DNA into positive knotted forms in the presence of type II topoisomerases.</text>
</comment>
<comment type="subunit">
    <text evidence="4">Forms a heterodimer with SMC2. Component of the condensin complex, which contains the SMC2 and SMC4 heterodimer, and three non SMC subunits that probably regulate the complex: BRN1, YCS4 and YCG1/YCS5.</text>
</comment>
<comment type="interaction">
    <interactant intactId="EBI-17430">
        <id>Q12267</id>
    </interactant>
    <interactant intactId="EBI-4792">
        <id>P38170</id>
        <label>BRN1</label>
    </interactant>
    <organismsDiffer>false</organismsDiffer>
    <experiments>2</experiments>
</comment>
<comment type="interaction">
    <interactant intactId="EBI-17430">
        <id>Q12267</id>
    </interactant>
    <interactant intactId="EBI-17412">
        <id>P38989</id>
        <label>SMC2</label>
    </interactant>
    <organismsDiffer>false</organismsDiffer>
    <experiments>2</experiments>
</comment>
<comment type="interaction">
    <interactant intactId="EBI-17430">
        <id>Q12267</id>
    </interactant>
    <interactant intactId="EBI-4799">
        <id>Q06680</id>
        <label>YCG1</label>
    </interactant>
    <organismsDiffer>false</organismsDiffer>
    <experiments>3</experiments>
</comment>
<comment type="interaction">
    <interactant intactId="EBI-17430">
        <id>Q12267</id>
    </interactant>
    <interactant intactId="EBI-4785">
        <id>Q06156</id>
        <label>YCS4</label>
    </interactant>
    <organismsDiffer>false</organismsDiffer>
    <experiments>2</experiments>
</comment>
<comment type="subcellular location">
    <subcellularLocation>
        <location>Nucleus</location>
    </subcellularLocation>
    <subcellularLocation>
        <location>Cytoplasm</location>
    </subcellularLocation>
    <subcellularLocation>
        <location>Chromosome</location>
    </subcellularLocation>
    <text>In interphase cells, the majority of the condensin complex is found in the cytoplasm, while a minority of the complex is associated with chromatin. A subpopulation of the complex however remains associated with chromosome foci in interphase cells. During mitosis, most of the condensin complex is associated with the chromatin. At the onset of prophase, condensin associates with chromosome arms and to chromosome condensation. Dissociation from chromosomes is observed in late telophase.</text>
</comment>
<comment type="domain">
    <text evidence="1">The flexible SMC hinge domain, which separates the large intramolecular coiled coil regions, allows the heterodimerization with SMC2, forming a V-shaped heterodimer.</text>
</comment>
<comment type="miscellaneous">
    <text evidence="5">Present with 573 molecules/cell in log phase SD medium.</text>
</comment>
<comment type="similarity">
    <text evidence="6">Belongs to the SMC family. SMC4 subfamily.</text>
</comment>
<gene>
    <name type="primary">SMC4</name>
    <name type="ordered locus">YLR086W</name>
    <name type="ORF">L9449.5</name>
</gene>
<keyword id="KW-0002">3D-structure</keyword>
<keyword id="KW-0007">Acetylation</keyword>
<keyword id="KW-0067">ATP-binding</keyword>
<keyword id="KW-0131">Cell cycle</keyword>
<keyword id="KW-0132">Cell division</keyword>
<keyword id="KW-0158">Chromosome</keyword>
<keyword id="KW-0175">Coiled coil</keyword>
<keyword id="KW-0963">Cytoplasm</keyword>
<keyword id="KW-0226">DNA condensation</keyword>
<keyword id="KW-0498">Mitosis</keyword>
<keyword id="KW-0547">Nucleotide-binding</keyword>
<keyword id="KW-0539">Nucleus</keyword>
<keyword id="KW-0597">Phosphoprotein</keyword>
<keyword id="KW-1185">Reference proteome</keyword>
<proteinExistence type="evidence at protein level"/>
<name>SMC4_YEAST</name>
<feature type="initiator methionine" description="Removed" evidence="8">
    <location>
        <position position="1"/>
    </location>
</feature>
<feature type="chain" id="PRO_0000119018" description="Structural maintenance of chromosomes protein 4">
    <location>
        <begin position="2"/>
        <end position="1418"/>
    </location>
</feature>
<feature type="domain" description="SMC hinge">
    <location>
        <begin position="686"/>
        <end position="799"/>
    </location>
</feature>
<feature type="region of interest" description="Disordered" evidence="3">
    <location>
        <begin position="1"/>
        <end position="122"/>
    </location>
</feature>
<feature type="coiled-coil region" evidence="2">
    <location>
        <begin position="345"/>
        <end position="673"/>
    </location>
</feature>
<feature type="coiled-coil region" evidence="2">
    <location>
        <begin position="849"/>
        <end position="1172"/>
    </location>
</feature>
<feature type="coiled-coil region" evidence="2">
    <location>
        <begin position="1224"/>
        <end position="1263"/>
    </location>
</feature>
<feature type="compositionally biased region" description="Polar residues" evidence="3">
    <location>
        <begin position="34"/>
        <end position="43"/>
    </location>
</feature>
<feature type="compositionally biased region" description="Polar residues" evidence="3">
    <location>
        <begin position="68"/>
        <end position="97"/>
    </location>
</feature>
<feature type="compositionally biased region" description="Low complexity" evidence="3">
    <location>
        <begin position="107"/>
        <end position="117"/>
    </location>
</feature>
<feature type="binding site" evidence="2">
    <location>
        <begin position="185"/>
        <end position="192"/>
    </location>
    <ligand>
        <name>ATP</name>
        <dbReference type="ChEBI" id="CHEBI:30616"/>
    </ligand>
</feature>
<feature type="modified residue" description="N-acetylserine" evidence="8">
    <location>
        <position position="2"/>
    </location>
</feature>
<feature type="modified residue" description="Phosphothreonine" evidence="7">
    <location>
        <position position="43"/>
    </location>
</feature>
<feature type="modified residue" description="Phosphoserine" evidence="7">
    <location>
        <position position="113"/>
    </location>
</feature>
<feature type="helix" evidence="10">
    <location>
        <begin position="135"/>
        <end position="141"/>
    </location>
</feature>
<feature type="strand" evidence="10">
    <location>
        <begin position="153"/>
        <end position="164"/>
    </location>
</feature>
<feature type="strand" evidence="10">
    <location>
        <begin position="169"/>
        <end position="173"/>
    </location>
</feature>
<feature type="strand" evidence="10">
    <location>
        <begin position="178"/>
        <end position="184"/>
    </location>
</feature>
<feature type="strand" evidence="10">
    <location>
        <begin position="189"/>
        <end position="191"/>
    </location>
</feature>
<feature type="helix" evidence="10">
    <location>
        <begin position="192"/>
        <end position="201"/>
    </location>
</feature>
<feature type="helix" evidence="10">
    <location>
        <begin position="206"/>
        <end position="209"/>
    </location>
</feature>
<feature type="helix" evidence="10">
    <location>
        <begin position="214"/>
        <end position="217"/>
    </location>
</feature>
<feature type="strand" evidence="10">
    <location>
        <begin position="229"/>
        <end position="241"/>
    </location>
</feature>
<feature type="strand" evidence="11">
    <location>
        <begin position="243"/>
        <end position="245"/>
    </location>
</feature>
<feature type="strand" evidence="10">
    <location>
        <begin position="247"/>
        <end position="249"/>
    </location>
</feature>
<feature type="strand" evidence="10">
    <location>
        <begin position="251"/>
        <end position="253"/>
    </location>
</feature>
<feature type="strand" evidence="10">
    <location>
        <begin position="256"/>
        <end position="263"/>
    </location>
</feature>
<feature type="strand" evidence="10">
    <location>
        <begin position="268"/>
        <end position="277"/>
    </location>
</feature>
<feature type="helix" evidence="10">
    <location>
        <begin position="279"/>
        <end position="288"/>
    </location>
</feature>
<feature type="turn" evidence="10">
    <location>
        <begin position="293"/>
        <end position="296"/>
    </location>
</feature>
<feature type="strand" evidence="10">
    <location>
        <begin position="297"/>
        <end position="300"/>
    </location>
</feature>
<feature type="turn" evidence="11">
    <location>
        <begin position="306"/>
        <end position="310"/>
    </location>
</feature>
<feature type="strand" evidence="11">
    <location>
        <begin position="312"/>
        <end position="314"/>
    </location>
</feature>
<feature type="strand" evidence="10">
    <location>
        <begin position="316"/>
        <end position="320"/>
    </location>
</feature>
<feature type="helix" evidence="10">
    <location>
        <begin position="323"/>
        <end position="331"/>
    </location>
</feature>
<feature type="helix" evidence="10">
    <location>
        <begin position="336"/>
        <end position="349"/>
    </location>
</feature>
<feature type="helix" evidence="9">
    <location>
        <begin position="562"/>
        <end position="681"/>
    </location>
</feature>
<feature type="strand" evidence="9">
    <location>
        <begin position="688"/>
        <end position="691"/>
    </location>
</feature>
<feature type="helix" evidence="9">
    <location>
        <begin position="692"/>
        <end position="694"/>
    </location>
</feature>
<feature type="strand" evidence="9">
    <location>
        <begin position="695"/>
        <end position="698"/>
    </location>
</feature>
<feature type="helix" evidence="9">
    <location>
        <begin position="700"/>
        <end position="702"/>
    </location>
</feature>
<feature type="helix" evidence="9">
    <location>
        <begin position="703"/>
        <end position="709"/>
    </location>
</feature>
<feature type="helix" evidence="9">
    <location>
        <begin position="711"/>
        <end position="714"/>
    </location>
</feature>
<feature type="strand" evidence="9">
    <location>
        <begin position="715"/>
        <end position="719"/>
    </location>
</feature>
<feature type="helix" evidence="9">
    <location>
        <begin position="721"/>
        <end position="734"/>
    </location>
</feature>
<feature type="strand" evidence="9">
    <location>
        <begin position="738"/>
        <end position="744"/>
    </location>
</feature>
<feature type="helix" evidence="9">
    <location>
        <begin position="758"/>
        <end position="760"/>
    </location>
</feature>
<feature type="turn" evidence="9">
    <location>
        <begin position="764"/>
        <end position="767"/>
    </location>
</feature>
<feature type="strand" evidence="9">
    <location>
        <begin position="768"/>
        <end position="772"/>
    </location>
</feature>
<feature type="helix" evidence="9">
    <location>
        <begin position="773"/>
        <end position="775"/>
    </location>
</feature>
<feature type="helix" evidence="9">
    <location>
        <begin position="778"/>
        <end position="782"/>
    </location>
</feature>
<feature type="strand" evidence="9">
    <location>
        <begin position="784"/>
        <end position="787"/>
    </location>
</feature>
<feature type="helix" evidence="9">
    <location>
        <begin position="794"/>
        <end position="797"/>
    </location>
</feature>
<feature type="strand" evidence="9">
    <location>
        <begin position="800"/>
        <end position="803"/>
    </location>
</feature>
<feature type="strand" evidence="9">
    <location>
        <begin position="806"/>
        <end position="808"/>
    </location>
</feature>
<feature type="strand" evidence="9">
    <location>
        <begin position="821"/>
        <end position="823"/>
    </location>
</feature>
<feature type="strand" evidence="9">
    <location>
        <begin position="832"/>
        <end position="834"/>
    </location>
</feature>
<feature type="helix" evidence="9">
    <location>
        <begin position="850"/>
        <end position="883"/>
    </location>
</feature>
<feature type="helix" evidence="9">
    <location>
        <begin position="886"/>
        <end position="910"/>
    </location>
</feature>
<feature type="turn" evidence="9">
    <location>
        <begin position="911"/>
        <end position="913"/>
    </location>
</feature>
<feature type="helix" evidence="9">
    <location>
        <begin position="914"/>
        <end position="925"/>
    </location>
</feature>
<feature type="helix" evidence="9">
    <location>
        <begin position="929"/>
        <end position="947"/>
    </location>
</feature>
<feature type="helix" evidence="10">
    <location>
        <begin position="1247"/>
        <end position="1286"/>
    </location>
</feature>
<feature type="strand" evidence="10">
    <location>
        <begin position="1290"/>
        <end position="1299"/>
    </location>
</feature>
<feature type="helix" evidence="10">
    <location>
        <begin position="1301"/>
        <end position="1304"/>
    </location>
</feature>
<feature type="strand" evidence="10">
    <location>
        <begin position="1306"/>
        <end position="1311"/>
    </location>
</feature>
<feature type="turn" evidence="10">
    <location>
        <begin position="1320"/>
        <end position="1322"/>
    </location>
</feature>
<feature type="helix" evidence="10">
    <location>
        <begin position="1325"/>
        <end position="1342"/>
    </location>
</feature>
<feature type="strand" evidence="10">
    <location>
        <begin position="1346"/>
        <end position="1352"/>
    </location>
</feature>
<feature type="turn" evidence="10">
    <location>
        <begin position="1353"/>
        <end position="1356"/>
    </location>
</feature>
<feature type="helix" evidence="10">
    <location>
        <begin position="1359"/>
        <end position="1371"/>
    </location>
</feature>
<feature type="strand" evidence="10">
    <location>
        <begin position="1375"/>
        <end position="1381"/>
    </location>
</feature>
<feature type="helix" evidence="10">
    <location>
        <begin position="1385"/>
        <end position="1389"/>
    </location>
</feature>
<feature type="strand" evidence="10">
    <location>
        <begin position="1392"/>
        <end position="1400"/>
    </location>
</feature>
<feature type="strand" evidence="10">
    <location>
        <begin position="1403"/>
        <end position="1410"/>
    </location>
</feature>
<organism>
    <name type="scientific">Saccharomyces cerevisiae (strain ATCC 204508 / S288c)</name>
    <name type="common">Baker's yeast</name>
    <dbReference type="NCBI Taxonomy" id="559292"/>
    <lineage>
        <taxon>Eukaryota</taxon>
        <taxon>Fungi</taxon>
        <taxon>Dikarya</taxon>
        <taxon>Ascomycota</taxon>
        <taxon>Saccharomycotina</taxon>
        <taxon>Saccharomycetes</taxon>
        <taxon>Saccharomycetales</taxon>
        <taxon>Saccharomycetaceae</taxon>
        <taxon>Saccharomyces</taxon>
    </lineage>
</organism>
<reference key="1">
    <citation type="journal article" date="1997" name="Nature">
        <title>The nucleotide sequence of Saccharomyces cerevisiae chromosome XII.</title>
        <authorList>
            <person name="Johnston M."/>
            <person name="Hillier L.W."/>
            <person name="Riles L."/>
            <person name="Albermann K."/>
            <person name="Andre B."/>
            <person name="Ansorge W."/>
            <person name="Benes V."/>
            <person name="Brueckner M."/>
            <person name="Delius H."/>
            <person name="Dubois E."/>
            <person name="Duesterhoeft A."/>
            <person name="Entian K.-D."/>
            <person name="Floeth M."/>
            <person name="Goffeau A."/>
            <person name="Hebling U."/>
            <person name="Heumann K."/>
            <person name="Heuss-Neitzel D."/>
            <person name="Hilbert H."/>
            <person name="Hilger F."/>
            <person name="Kleine K."/>
            <person name="Koetter P."/>
            <person name="Louis E.J."/>
            <person name="Messenguy F."/>
            <person name="Mewes H.-W."/>
            <person name="Miosga T."/>
            <person name="Moestl D."/>
            <person name="Mueller-Auer S."/>
            <person name="Nentwich U."/>
            <person name="Obermaier B."/>
            <person name="Piravandi E."/>
            <person name="Pohl T.M."/>
            <person name="Portetelle D."/>
            <person name="Purnelle B."/>
            <person name="Rechmann S."/>
            <person name="Rieger M."/>
            <person name="Rinke M."/>
            <person name="Rose M."/>
            <person name="Scharfe M."/>
            <person name="Scherens B."/>
            <person name="Scholler P."/>
            <person name="Schwager C."/>
            <person name="Schwarz S."/>
            <person name="Underwood A.P."/>
            <person name="Urrestarazu L.A."/>
            <person name="Vandenbol M."/>
            <person name="Verhasselt P."/>
            <person name="Vierendeels F."/>
            <person name="Voet M."/>
            <person name="Volckaert G."/>
            <person name="Voss H."/>
            <person name="Wambutt R."/>
            <person name="Wedler E."/>
            <person name="Wedler H."/>
            <person name="Zimmermann F.K."/>
            <person name="Zollner A."/>
            <person name="Hani J."/>
            <person name="Hoheisel J.D."/>
        </authorList>
    </citation>
    <scope>NUCLEOTIDE SEQUENCE [LARGE SCALE GENOMIC DNA]</scope>
    <source>
        <strain>ATCC 204508 / S288c</strain>
    </source>
</reference>
<reference key="2">
    <citation type="journal article" date="2014" name="G3 (Bethesda)">
        <title>The reference genome sequence of Saccharomyces cerevisiae: Then and now.</title>
        <authorList>
            <person name="Engel S.R."/>
            <person name="Dietrich F.S."/>
            <person name="Fisk D.G."/>
            <person name="Binkley G."/>
            <person name="Balakrishnan R."/>
            <person name="Costanzo M.C."/>
            <person name="Dwight S.S."/>
            <person name="Hitz B.C."/>
            <person name="Karra K."/>
            <person name="Nash R.S."/>
            <person name="Weng S."/>
            <person name="Wong E.D."/>
            <person name="Lloyd P."/>
            <person name="Skrzypek M.S."/>
            <person name="Miyasato S.R."/>
            <person name="Simison M."/>
            <person name="Cherry J.M."/>
        </authorList>
    </citation>
    <scope>GENOME REANNOTATION</scope>
    <source>
        <strain>ATCC 204508 / S288c</strain>
    </source>
</reference>
<reference key="3">
    <citation type="journal article" date="2000" name="J. Cell Biol.">
        <title>The condensin complex governs chromosome condensation and mitotic transmission of rDNA.</title>
        <authorList>
            <person name="Freeman L."/>
            <person name="Aragon-Alcaide L."/>
            <person name="Strunnikov A.V."/>
        </authorList>
    </citation>
    <scope>IDENTIFICATION IN A CONDENSIN COMPLEX WITH SMC2; BRN1; YCS4 AND YCG1</scope>
</reference>
<reference key="4">
    <citation type="journal article" date="2003" name="Nature">
        <title>Global analysis of protein expression in yeast.</title>
        <authorList>
            <person name="Ghaemmaghami S."/>
            <person name="Huh W.-K."/>
            <person name="Bower K."/>
            <person name="Howson R.W."/>
            <person name="Belle A."/>
            <person name="Dephoure N."/>
            <person name="O'Shea E.K."/>
            <person name="Weissman J.S."/>
        </authorList>
    </citation>
    <scope>LEVEL OF PROTEIN EXPRESSION [LARGE SCALE ANALYSIS]</scope>
</reference>
<reference key="5">
    <citation type="journal article" date="2008" name="Mol. Cell. Proteomics">
        <title>A multidimensional chromatography technology for in-depth phosphoproteome analysis.</title>
        <authorList>
            <person name="Albuquerque C.P."/>
            <person name="Smolka M.B."/>
            <person name="Payne S.H."/>
            <person name="Bafna V."/>
            <person name="Eng J."/>
            <person name="Zhou H."/>
        </authorList>
    </citation>
    <scope>PHOSPHORYLATION [LARGE SCALE ANALYSIS] AT THR-43 AND SER-113</scope>
    <scope>IDENTIFICATION BY MASS SPECTROMETRY [LARGE SCALE ANALYSIS]</scope>
</reference>
<reference key="6">
    <citation type="journal article" date="2009" name="Science">
        <title>Global analysis of Cdk1 substrate phosphorylation sites provides insights into evolution.</title>
        <authorList>
            <person name="Holt L.J."/>
            <person name="Tuch B.B."/>
            <person name="Villen J."/>
            <person name="Johnson A.D."/>
            <person name="Gygi S.P."/>
            <person name="Morgan D.O."/>
        </authorList>
    </citation>
    <scope>IDENTIFICATION BY MASS SPECTROMETRY [LARGE SCALE ANALYSIS]</scope>
</reference>
<reference key="7">
    <citation type="journal article" date="2012" name="Proc. Natl. Acad. Sci. U.S.A.">
        <title>N-terminal acetylome analyses and functional insights of the N-terminal acetyltransferase NatB.</title>
        <authorList>
            <person name="Van Damme P."/>
            <person name="Lasa M."/>
            <person name="Polevoda B."/>
            <person name="Gazquez C."/>
            <person name="Elosegui-Artola A."/>
            <person name="Kim D.S."/>
            <person name="De Juan-Pardo E."/>
            <person name="Demeyer K."/>
            <person name="Hole K."/>
            <person name="Larrea E."/>
            <person name="Timmerman E."/>
            <person name="Prieto J."/>
            <person name="Arnesen T."/>
            <person name="Sherman F."/>
            <person name="Gevaert K."/>
            <person name="Aldabe R."/>
        </authorList>
    </citation>
    <scope>ACETYLATION [LARGE SCALE ANALYSIS] AT SER-2</scope>
    <scope>CLEAVAGE OF INITIATOR METHIONINE [LARGE SCALE ANALYSIS]</scope>
    <scope>IDENTIFICATION BY MASS SPECTROMETRY [LARGE SCALE ANALYSIS]</scope>
</reference>
<protein>
    <recommendedName>
        <fullName>Structural maintenance of chromosomes protein 4</fullName>
    </recommendedName>
</protein>